<protein>
    <recommendedName>
        <fullName evidence="5">Large ribosomal subunit protein eL21</fullName>
    </recommendedName>
    <alternativeName>
        <fullName>50S ribosomal protein L21e</fullName>
    </alternativeName>
    <alternativeName>
        <fullName>Hl31</fullName>
    </alternativeName>
</protein>
<feature type="initiator methionine" description="Removed" evidence="4">
    <location>
        <position position="1"/>
    </location>
</feature>
<feature type="chain" id="PRO_0000149686" description="Large ribosomal subunit protein eL21">
    <location>
        <begin position="2"/>
        <end position="96"/>
    </location>
</feature>
<feature type="region of interest" description="Disordered" evidence="1">
    <location>
        <begin position="1"/>
        <end position="66"/>
    </location>
</feature>
<feature type="turn" evidence="6">
    <location>
        <begin position="7"/>
        <end position="10"/>
    </location>
</feature>
<feature type="turn" evidence="6">
    <location>
        <begin position="12"/>
        <end position="15"/>
    </location>
</feature>
<feature type="helix" evidence="6">
    <location>
        <begin position="19"/>
        <end position="21"/>
    </location>
</feature>
<feature type="helix" evidence="6">
    <location>
        <begin position="28"/>
        <end position="31"/>
    </location>
</feature>
<feature type="strand" evidence="6">
    <location>
        <begin position="39"/>
        <end position="42"/>
    </location>
</feature>
<feature type="helix" evidence="6">
    <location>
        <begin position="55"/>
        <end position="57"/>
    </location>
</feature>
<feature type="strand" evidence="6">
    <location>
        <begin position="61"/>
        <end position="68"/>
    </location>
</feature>
<feature type="strand" evidence="6">
    <location>
        <begin position="71"/>
        <end position="78"/>
    </location>
</feature>
<feature type="strand" evidence="6">
    <location>
        <begin position="81"/>
        <end position="87"/>
    </location>
</feature>
<feature type="helix" evidence="6">
    <location>
        <begin position="89"/>
        <end position="91"/>
    </location>
</feature>
<feature type="strand" evidence="6">
    <location>
        <begin position="92"/>
        <end position="94"/>
    </location>
</feature>
<organism>
    <name type="scientific">Haloarcula marismortui (strain ATCC 43049 / DSM 3752 / JCM 8966 / VKM B-1809)</name>
    <name type="common">Halobacterium marismortui</name>
    <dbReference type="NCBI Taxonomy" id="272569"/>
    <lineage>
        <taxon>Archaea</taxon>
        <taxon>Methanobacteriati</taxon>
        <taxon>Methanobacteriota</taxon>
        <taxon>Stenosarchaea group</taxon>
        <taxon>Halobacteria</taxon>
        <taxon>Halobacteriales</taxon>
        <taxon>Haloarculaceae</taxon>
        <taxon>Haloarcula</taxon>
    </lineage>
</organism>
<proteinExistence type="evidence at protein level"/>
<evidence type="ECO:0000256" key="1">
    <source>
        <dbReference type="SAM" id="MobiDB-lite"/>
    </source>
</evidence>
<evidence type="ECO:0000269" key="2">
    <source>
    </source>
</evidence>
<evidence type="ECO:0000269" key="3">
    <source>
    </source>
</evidence>
<evidence type="ECO:0000269" key="4">
    <source>
    </source>
</evidence>
<evidence type="ECO:0000305" key="5"/>
<evidence type="ECO:0007829" key="6">
    <source>
        <dbReference type="PDB" id="1VQ8"/>
    </source>
</evidence>
<reference key="1">
    <citation type="journal article" date="2004" name="Genome Res.">
        <title>Genome sequence of Haloarcula marismortui: a halophilic archaeon from the Dead Sea.</title>
        <authorList>
            <person name="Baliga N.S."/>
            <person name="Bonneau R."/>
            <person name="Facciotti M.T."/>
            <person name="Pan M."/>
            <person name="Glusman G."/>
            <person name="Deutsch E.W."/>
            <person name="Shannon P."/>
            <person name="Chiu Y."/>
            <person name="Weng R.S."/>
            <person name="Gan R.R."/>
            <person name="Hung P."/>
            <person name="Date S.V."/>
            <person name="Marcotte E."/>
            <person name="Hood L."/>
            <person name="Ng W.V."/>
        </authorList>
    </citation>
    <scope>NUCLEOTIDE SEQUENCE [LARGE SCALE GENOMIC DNA]</scope>
    <source>
        <strain>ATCC 43049 / DSM 3752 / JCM 8966 / VKM B-1809</strain>
    </source>
</reference>
<reference key="2">
    <citation type="journal article" date="1988" name="Eur. J. Biochem.">
        <title>Complete amino acid sequences of the ribosomal proteins L25, L29 and L31 from the archaebacterium Halobacterium marismortui.</title>
        <authorList>
            <person name="Hatakeyama T."/>
            <person name="Kimura M."/>
        </authorList>
    </citation>
    <scope>PROTEIN SEQUENCE OF 2-96</scope>
</reference>
<reference key="3">
    <citation type="journal article" date="1993" name="J. Mol. Biol.">
        <title>Localization of proteins HL29 and HL31 from Haloarcula marismortui within the 50 S ribosomal subunit by chemical crosslinking.</title>
        <authorList>
            <person name="Bergmann U."/>
            <person name="Wittmann-Liebold B."/>
        </authorList>
    </citation>
    <scope>CROSS-LINKING TO L18</scope>
</reference>
<reference key="4">
    <citation type="journal article" date="2000" name="Science">
        <title>The complete atomic structure of the large ribosomal subunit at 2.4 A resolution.</title>
        <authorList>
            <person name="Ban N."/>
            <person name="Nissen P."/>
            <person name="Hansen J."/>
            <person name="Moore P.B."/>
            <person name="Steitz T.A."/>
        </authorList>
    </citation>
    <scope>X-RAY CRYSTALLOGRAPHY (2.4 ANGSTROMS) OF THE 50S SUBUNIT</scope>
    <source>
        <strain>ATCC 43049 / DSM 3752 / JCM 8966 / VKM B-1809</strain>
    </source>
</reference>
<reference key="5">
    <citation type="journal article" date="2000" name="Science">
        <title>The structural basis of ribosome activity in peptide bond synthesis.</title>
        <authorList>
            <person name="Nissen P."/>
            <person name="Hansen J."/>
            <person name="Ban N."/>
            <person name="Moore P.B."/>
            <person name="Steitz T.A."/>
        </authorList>
    </citation>
    <scope>X-RAY CRYSTALLOGRAPHY (3.0 ANGSTROMS) OF THE 50S SUBUNIT</scope>
    <source>
        <strain>ATCC 43049 / DSM 3752 / JCM 8966 / VKM B-1809</strain>
    </source>
</reference>
<reference key="6">
    <citation type="journal article" date="2002" name="Nat. Struct. Biol.">
        <title>A pre-translocational intermediate in protein synthesis observed in crystals of enzymatically active 50S subunits.</title>
        <authorList>
            <person name="Schmeing T.M."/>
            <person name="Seila A.C."/>
            <person name="Hansen J.L."/>
            <person name="Freeborn B."/>
            <person name="Soukup J.K."/>
            <person name="Scaringe S.A."/>
            <person name="Strobel S.A."/>
            <person name="Moore P.B."/>
            <person name="Steitz T.A."/>
        </authorList>
    </citation>
    <scope>X-RAY CRYSTALLOGRAPHY (3.1 ANGSTROMS) OF THE 50S SUBUNIT</scope>
    <source>
        <strain>ATCC 43049 / DSM 3752 / JCM 8966 / VKM B-1809</strain>
    </source>
</reference>
<reference key="7">
    <citation type="journal article" date="2001" name="EMBO J.">
        <title>The kink-turn: a new RNA secondary structure motif.</title>
        <authorList>
            <person name="Klein D.J."/>
            <person name="Schmeing T.M."/>
            <person name="Moore P.B."/>
            <person name="Steitz T.A."/>
        </authorList>
    </citation>
    <scope>X-RAY CRYSTALLOGRAPHY (2.4 ANGSTROMS) OF THE 50S SUBUNIT</scope>
    <source>
        <strain>ATCC 43049 / DSM 3752 / JCM 8966 / VKM B-1809</strain>
    </source>
</reference>
<reference key="8">
    <citation type="journal article" date="2002" name="Mol. Cell">
        <title>The structures of four macrolide antibiotics bound to the large ribosomal subunit.</title>
        <authorList>
            <person name="Hansen J.L."/>
            <person name="Ippolito J.A."/>
            <person name="Ban N."/>
            <person name="Nissen P."/>
            <person name="Moore P.B."/>
            <person name="Steitz T.A."/>
        </authorList>
    </citation>
    <scope>X-RAY CRYSTALLOGRAPHY (3.0 ANGSTROMS) OF THE 50S SUBUNIT IN COMPLEX WITH FOUR MACROLIDE ANTIBIOTICS</scope>
    <source>
        <strain>ATCC 43049 / DSM 3752 / JCM 8966 / VKM B-1809</strain>
    </source>
</reference>
<reference key="9">
    <citation type="journal article" date="2002" name="Proc. Natl. Acad. Sci. U.S.A.">
        <title>Structural insights into peptide bond formation.</title>
        <authorList>
            <person name="Hansen J.L."/>
            <person name="Schmeing T.M."/>
            <person name="Moore P.B."/>
            <person name="Steitz T.A."/>
        </authorList>
    </citation>
    <scope>X-RAY CRYSTALLOGRAPHY (2.8 ANGSTROMS) OF THE 50S SUBUNIT</scope>
    <source>
        <strain>ATCC 43049 / DSM 3752 / JCM 8966 / VKM B-1809</strain>
    </source>
</reference>
<reference key="10">
    <citation type="journal article" date="2003" name="J. Mol. Biol.">
        <title>Structures of five antibiotics bound at the peptidyl transferase center of the large ribosomal subunit.</title>
        <authorList>
            <person name="Hansen J.L."/>
            <person name="Moore P.B."/>
            <person name="Steitz T.A."/>
        </authorList>
    </citation>
    <scope>X-RAY CRYSTALLOGRAPHY (3.0 ANGSTROMS) OF THE 50S SUBUNIT IN COMPLEX WITH FIVE ANTIBIOTICS AT THE PEPTIDYL TRANSFERASE CENTER</scope>
    <source>
        <strain>ATCC 43049 / DSM 3752 / JCM 8966 / VKM B-1809</strain>
    </source>
</reference>
<reference key="11">
    <citation type="journal article" date="2003" name="RNA">
        <title>Structures of deacylated tRNA mimics bound to the E site of the large ribosomal subunit.</title>
        <authorList>
            <person name="Schmeing T.M."/>
            <person name="Moore P.B."/>
            <person name="Steitz T.A."/>
        </authorList>
    </citation>
    <scope>X-RAY CRYSTALLOGRAPHY (2.9 ANGSTROMS) OF THE 50S SUBUNIT WITH TWO DIFFERENT E SITE SUBSTRATES</scope>
</reference>
<reference key="12">
    <citation type="journal article" date="2013" name="Acta Crystallogr. D">
        <title>Revisiting the Haloarcula marismortui 50S ribosomal subunit model.</title>
        <authorList>
            <person name="Gabdulkhakov A."/>
            <person name="Nikonov S."/>
            <person name="Garber M."/>
        </authorList>
    </citation>
    <scope>X-RAY CRYSTALLOGRAPHY (2.4 ANGSTROMS) OF THE 50S SUBUNIT</scope>
</reference>
<gene>
    <name type="primary">rpl21e</name>
    <name type="ordered locus">rrnAC0260</name>
</gene>
<comment type="function">
    <text>This is one of 5 proteins that mediate the attachment of the 5S rRNA onto the large ribosomal subunit, stabilizing the orientation of adjacent RNA domains.</text>
</comment>
<comment type="subunit">
    <text evidence="2 3">Part of the 50S ribosomal subunit. Interacts with protein L18 and binds the 5S rRNA. Has been cross-linked to L18.</text>
</comment>
<comment type="similarity">
    <text evidence="5">Belongs to the eukaryotic ribosomal protein eL21 family.</text>
</comment>
<keyword id="KW-0002">3D-structure</keyword>
<keyword id="KW-0903">Direct protein sequencing</keyword>
<keyword id="KW-1185">Reference proteome</keyword>
<keyword id="KW-0687">Ribonucleoprotein</keyword>
<keyword id="KW-0689">Ribosomal protein</keyword>
<keyword id="KW-0694">RNA-binding</keyword>
<keyword id="KW-0699">rRNA-binding</keyword>
<name>RL21_HALMA</name>
<sequence length="96" mass="10548">MPSSNGPLEGTRGKLKNKPRDRGTSPPQRAVEEFDDGEKVHLKIDPSVPNGRFHPRFDGQTGTVEGKQGDAYKVDIVDGGKEKTIIVTAAHLRRQE</sequence>
<dbReference type="EMBL" id="AY596297">
    <property type="protein sequence ID" value="AAV45317.1"/>
    <property type="molecule type" value="Genomic_DNA"/>
</dbReference>
<dbReference type="PIR" id="S00370">
    <property type="entry name" value="R5HS31"/>
</dbReference>
<dbReference type="RefSeq" id="WP_004962804.1">
    <property type="nucleotide sequence ID" value="NZ_CP039138.1"/>
</dbReference>
<dbReference type="PDB" id="1FFK">
    <property type="method" value="X-ray"/>
    <property type="resolution" value="2.40 A"/>
    <property type="chains" value="N=2-96"/>
</dbReference>
<dbReference type="PDB" id="1JJ2">
    <property type="method" value="X-ray"/>
    <property type="resolution" value="2.40 A"/>
    <property type="chains" value="P=2-96"/>
</dbReference>
<dbReference type="PDB" id="1K73">
    <property type="method" value="X-ray"/>
    <property type="resolution" value="3.01 A"/>
    <property type="chains" value="R=2-96"/>
</dbReference>
<dbReference type="PDB" id="1K8A">
    <property type="method" value="X-ray"/>
    <property type="resolution" value="3.00 A"/>
    <property type="chains" value="R=2-96"/>
</dbReference>
<dbReference type="PDB" id="1K9M">
    <property type="method" value="X-ray"/>
    <property type="resolution" value="3.00 A"/>
    <property type="chains" value="R=2-96"/>
</dbReference>
<dbReference type="PDB" id="1KC8">
    <property type="method" value="X-ray"/>
    <property type="resolution" value="3.01 A"/>
    <property type="chains" value="R=2-96"/>
</dbReference>
<dbReference type="PDB" id="1KD1">
    <property type="method" value="X-ray"/>
    <property type="resolution" value="3.00 A"/>
    <property type="chains" value="R=2-96"/>
</dbReference>
<dbReference type="PDB" id="1KQS">
    <property type="method" value="X-ray"/>
    <property type="resolution" value="3.10 A"/>
    <property type="chains" value="P=2-96"/>
</dbReference>
<dbReference type="PDB" id="1M1K">
    <property type="method" value="X-ray"/>
    <property type="resolution" value="3.20 A"/>
    <property type="chains" value="R=2-96"/>
</dbReference>
<dbReference type="PDB" id="1M90">
    <property type="method" value="X-ray"/>
    <property type="resolution" value="2.80 A"/>
    <property type="chains" value="R=2-96"/>
</dbReference>
<dbReference type="PDB" id="1N8R">
    <property type="method" value="X-ray"/>
    <property type="resolution" value="3.00 A"/>
    <property type="chains" value="R=2-96"/>
</dbReference>
<dbReference type="PDB" id="1NJI">
    <property type="method" value="X-ray"/>
    <property type="resolution" value="3.00 A"/>
    <property type="chains" value="R=2-96"/>
</dbReference>
<dbReference type="PDB" id="1Q7Y">
    <property type="method" value="X-ray"/>
    <property type="resolution" value="3.20 A"/>
    <property type="chains" value="R=2-96"/>
</dbReference>
<dbReference type="PDB" id="1Q81">
    <property type="method" value="X-ray"/>
    <property type="resolution" value="2.95 A"/>
    <property type="chains" value="R=2-96"/>
</dbReference>
<dbReference type="PDB" id="1Q82">
    <property type="method" value="X-ray"/>
    <property type="resolution" value="2.98 A"/>
    <property type="chains" value="R=2-96"/>
</dbReference>
<dbReference type="PDB" id="1Q86">
    <property type="method" value="X-ray"/>
    <property type="resolution" value="3.00 A"/>
    <property type="chains" value="R=2-96"/>
</dbReference>
<dbReference type="PDB" id="1QVF">
    <property type="method" value="X-ray"/>
    <property type="resolution" value="3.10 A"/>
    <property type="chains" value="P=2-96"/>
</dbReference>
<dbReference type="PDB" id="1QVG">
    <property type="method" value="X-ray"/>
    <property type="resolution" value="2.90 A"/>
    <property type="chains" value="P=2-96"/>
</dbReference>
<dbReference type="PDB" id="1S72">
    <property type="method" value="X-ray"/>
    <property type="resolution" value="2.40 A"/>
    <property type="chains" value="Q=1-96"/>
</dbReference>
<dbReference type="PDB" id="1VQ4">
    <property type="method" value="X-ray"/>
    <property type="resolution" value="2.70 A"/>
    <property type="chains" value="Q=1-96"/>
</dbReference>
<dbReference type="PDB" id="1VQ5">
    <property type="method" value="X-ray"/>
    <property type="resolution" value="2.60 A"/>
    <property type="chains" value="Q=1-96"/>
</dbReference>
<dbReference type="PDB" id="1VQ6">
    <property type="method" value="X-ray"/>
    <property type="resolution" value="2.70 A"/>
    <property type="chains" value="Q=1-96"/>
</dbReference>
<dbReference type="PDB" id="1VQ7">
    <property type="method" value="X-ray"/>
    <property type="resolution" value="2.50 A"/>
    <property type="chains" value="Q=1-96"/>
</dbReference>
<dbReference type="PDB" id="1VQ8">
    <property type="method" value="X-ray"/>
    <property type="resolution" value="2.20 A"/>
    <property type="chains" value="Q=1-96"/>
</dbReference>
<dbReference type="PDB" id="1VQ9">
    <property type="method" value="X-ray"/>
    <property type="resolution" value="2.40 A"/>
    <property type="chains" value="Q=1-96"/>
</dbReference>
<dbReference type="PDB" id="1VQK">
    <property type="method" value="X-ray"/>
    <property type="resolution" value="2.30 A"/>
    <property type="chains" value="Q=1-96"/>
</dbReference>
<dbReference type="PDB" id="1VQL">
    <property type="method" value="X-ray"/>
    <property type="resolution" value="2.30 A"/>
    <property type="chains" value="Q=1-96"/>
</dbReference>
<dbReference type="PDB" id="1VQM">
    <property type="method" value="X-ray"/>
    <property type="resolution" value="2.30 A"/>
    <property type="chains" value="Q=1-96"/>
</dbReference>
<dbReference type="PDB" id="1VQN">
    <property type="method" value="X-ray"/>
    <property type="resolution" value="2.40 A"/>
    <property type="chains" value="Q=1-96"/>
</dbReference>
<dbReference type="PDB" id="1VQO">
    <property type="method" value="X-ray"/>
    <property type="resolution" value="2.20 A"/>
    <property type="chains" value="Q=1-96"/>
</dbReference>
<dbReference type="PDB" id="1VQP">
    <property type="method" value="X-ray"/>
    <property type="resolution" value="2.25 A"/>
    <property type="chains" value="Q=1-96"/>
</dbReference>
<dbReference type="PDB" id="1W2B">
    <property type="method" value="X-ray"/>
    <property type="resolution" value="3.50 A"/>
    <property type="chains" value="P=2-96"/>
</dbReference>
<dbReference type="PDB" id="1YHQ">
    <property type="method" value="X-ray"/>
    <property type="resolution" value="2.40 A"/>
    <property type="chains" value="Q=1-96"/>
</dbReference>
<dbReference type="PDB" id="1YI2">
    <property type="method" value="X-ray"/>
    <property type="resolution" value="2.65 A"/>
    <property type="chains" value="Q=1-96"/>
</dbReference>
<dbReference type="PDB" id="1YIJ">
    <property type="method" value="X-ray"/>
    <property type="resolution" value="2.60 A"/>
    <property type="chains" value="Q=1-96"/>
</dbReference>
<dbReference type="PDB" id="1YIT">
    <property type="method" value="X-ray"/>
    <property type="resolution" value="2.80 A"/>
    <property type="chains" value="Q=1-96"/>
</dbReference>
<dbReference type="PDB" id="1YJ9">
    <property type="method" value="X-ray"/>
    <property type="resolution" value="2.90 A"/>
    <property type="chains" value="Q=1-96"/>
</dbReference>
<dbReference type="PDB" id="1YJN">
    <property type="method" value="X-ray"/>
    <property type="resolution" value="3.00 A"/>
    <property type="chains" value="Q=1-96"/>
</dbReference>
<dbReference type="PDB" id="1YJW">
    <property type="method" value="X-ray"/>
    <property type="resolution" value="2.90 A"/>
    <property type="chains" value="Q=1-96"/>
</dbReference>
<dbReference type="PDB" id="2OTJ">
    <property type="method" value="X-ray"/>
    <property type="resolution" value="2.90 A"/>
    <property type="chains" value="Q=1-96"/>
</dbReference>
<dbReference type="PDB" id="2OTL">
    <property type="method" value="X-ray"/>
    <property type="resolution" value="2.70 A"/>
    <property type="chains" value="Q=1-96"/>
</dbReference>
<dbReference type="PDB" id="2QA4">
    <property type="method" value="X-ray"/>
    <property type="resolution" value="3.00 A"/>
    <property type="chains" value="Q=1-96"/>
</dbReference>
<dbReference type="PDB" id="2QEX">
    <property type="method" value="X-ray"/>
    <property type="resolution" value="2.90 A"/>
    <property type="chains" value="Q=1-96"/>
</dbReference>
<dbReference type="PDB" id="3CC2">
    <property type="method" value="X-ray"/>
    <property type="resolution" value="2.40 A"/>
    <property type="chains" value="Q=1-96"/>
</dbReference>
<dbReference type="PDB" id="3CC4">
    <property type="method" value="X-ray"/>
    <property type="resolution" value="2.70 A"/>
    <property type="chains" value="Q=1-96"/>
</dbReference>
<dbReference type="PDB" id="3CC7">
    <property type="method" value="X-ray"/>
    <property type="resolution" value="2.70 A"/>
    <property type="chains" value="Q=1-96"/>
</dbReference>
<dbReference type="PDB" id="3CCE">
    <property type="method" value="X-ray"/>
    <property type="resolution" value="2.75 A"/>
    <property type="chains" value="Q=1-96"/>
</dbReference>
<dbReference type="PDB" id="3CCJ">
    <property type="method" value="X-ray"/>
    <property type="resolution" value="2.70 A"/>
    <property type="chains" value="Q=1-96"/>
</dbReference>
<dbReference type="PDB" id="3CCL">
    <property type="method" value="X-ray"/>
    <property type="resolution" value="2.90 A"/>
    <property type="chains" value="Q=1-96"/>
</dbReference>
<dbReference type="PDB" id="3CCM">
    <property type="method" value="X-ray"/>
    <property type="resolution" value="2.55 A"/>
    <property type="chains" value="Q=1-96"/>
</dbReference>
<dbReference type="PDB" id="3CCQ">
    <property type="method" value="X-ray"/>
    <property type="resolution" value="2.90 A"/>
    <property type="chains" value="Q=1-96"/>
</dbReference>
<dbReference type="PDB" id="3CCR">
    <property type="method" value="X-ray"/>
    <property type="resolution" value="3.00 A"/>
    <property type="chains" value="Q=1-96"/>
</dbReference>
<dbReference type="PDB" id="3CCS">
    <property type="method" value="X-ray"/>
    <property type="resolution" value="2.95 A"/>
    <property type="chains" value="Q=1-96"/>
</dbReference>
<dbReference type="PDB" id="3CCU">
    <property type="method" value="X-ray"/>
    <property type="resolution" value="2.80 A"/>
    <property type="chains" value="Q=1-96"/>
</dbReference>
<dbReference type="PDB" id="3CCV">
    <property type="method" value="X-ray"/>
    <property type="resolution" value="2.90 A"/>
    <property type="chains" value="Q=1-96"/>
</dbReference>
<dbReference type="PDB" id="3CD6">
    <property type="method" value="X-ray"/>
    <property type="resolution" value="2.75 A"/>
    <property type="chains" value="Q=1-96"/>
</dbReference>
<dbReference type="PDB" id="3CMA">
    <property type="method" value="X-ray"/>
    <property type="resolution" value="2.80 A"/>
    <property type="chains" value="Q=1-96"/>
</dbReference>
<dbReference type="PDB" id="3CME">
    <property type="method" value="X-ray"/>
    <property type="resolution" value="2.95 A"/>
    <property type="chains" value="Q=1-96"/>
</dbReference>
<dbReference type="PDB" id="3CPW">
    <property type="method" value="X-ray"/>
    <property type="resolution" value="2.70 A"/>
    <property type="chains" value="P=1-96"/>
</dbReference>
<dbReference type="PDB" id="3CXC">
    <property type="method" value="X-ray"/>
    <property type="resolution" value="3.00 A"/>
    <property type="chains" value="P=2-96"/>
</dbReference>
<dbReference type="PDB" id="3G4S">
    <property type="method" value="X-ray"/>
    <property type="resolution" value="3.20 A"/>
    <property type="chains" value="Q=2-96"/>
</dbReference>
<dbReference type="PDB" id="3G6E">
    <property type="method" value="X-ray"/>
    <property type="resolution" value="2.70 A"/>
    <property type="chains" value="Q=2-96"/>
</dbReference>
<dbReference type="PDB" id="3G71">
    <property type="method" value="X-ray"/>
    <property type="resolution" value="2.85 A"/>
    <property type="chains" value="Q=2-96"/>
</dbReference>
<dbReference type="PDB" id="3I55">
    <property type="method" value="X-ray"/>
    <property type="resolution" value="3.11 A"/>
    <property type="chains" value="Q=1-96"/>
</dbReference>
<dbReference type="PDB" id="3I56">
    <property type="method" value="X-ray"/>
    <property type="resolution" value="2.90 A"/>
    <property type="chains" value="Q=1-96"/>
</dbReference>
<dbReference type="PDB" id="3OW2">
    <property type="method" value="X-ray"/>
    <property type="resolution" value="2.70 A"/>
    <property type="chains" value="P=2-96"/>
</dbReference>
<dbReference type="PDB" id="4ADX">
    <property type="method" value="EM"/>
    <property type="resolution" value="6.60 A"/>
    <property type="chains" value="Q=1-96"/>
</dbReference>
<dbReference type="PDB" id="4V9F">
    <property type="method" value="X-ray"/>
    <property type="resolution" value="2.40 A"/>
    <property type="chains" value="Q=1-96"/>
</dbReference>
<dbReference type="PDBsum" id="1FFK"/>
<dbReference type="PDBsum" id="1JJ2"/>
<dbReference type="PDBsum" id="1K73"/>
<dbReference type="PDBsum" id="1K8A"/>
<dbReference type="PDBsum" id="1K9M"/>
<dbReference type="PDBsum" id="1KC8"/>
<dbReference type="PDBsum" id="1KD1"/>
<dbReference type="PDBsum" id="1KQS"/>
<dbReference type="PDBsum" id="1M1K"/>
<dbReference type="PDBsum" id="1M90"/>
<dbReference type="PDBsum" id="1N8R"/>
<dbReference type="PDBsum" id="1NJI"/>
<dbReference type="PDBsum" id="1Q7Y"/>
<dbReference type="PDBsum" id="1Q81"/>
<dbReference type="PDBsum" id="1Q82"/>
<dbReference type="PDBsum" id="1Q86"/>
<dbReference type="PDBsum" id="1QVF"/>
<dbReference type="PDBsum" id="1QVG"/>
<dbReference type="PDBsum" id="1S72"/>
<dbReference type="PDBsum" id="1VQ4"/>
<dbReference type="PDBsum" id="1VQ5"/>
<dbReference type="PDBsum" id="1VQ6"/>
<dbReference type="PDBsum" id="1VQ7"/>
<dbReference type="PDBsum" id="1VQ8"/>
<dbReference type="PDBsum" id="1VQ9"/>
<dbReference type="PDBsum" id="1VQK"/>
<dbReference type="PDBsum" id="1VQL"/>
<dbReference type="PDBsum" id="1VQM"/>
<dbReference type="PDBsum" id="1VQN"/>
<dbReference type="PDBsum" id="1VQO"/>
<dbReference type="PDBsum" id="1VQP"/>
<dbReference type="PDBsum" id="1W2B"/>
<dbReference type="PDBsum" id="1YHQ"/>
<dbReference type="PDBsum" id="1YI2"/>
<dbReference type="PDBsum" id="1YIJ"/>
<dbReference type="PDBsum" id="1YIT"/>
<dbReference type="PDBsum" id="1YJ9"/>
<dbReference type="PDBsum" id="1YJN"/>
<dbReference type="PDBsum" id="1YJW"/>
<dbReference type="PDBsum" id="2OTJ"/>
<dbReference type="PDBsum" id="2OTL"/>
<dbReference type="PDBsum" id="2QA4"/>
<dbReference type="PDBsum" id="2QEX"/>
<dbReference type="PDBsum" id="3CC2"/>
<dbReference type="PDBsum" id="3CC4"/>
<dbReference type="PDBsum" id="3CC7"/>
<dbReference type="PDBsum" id="3CCE"/>
<dbReference type="PDBsum" id="3CCJ"/>
<dbReference type="PDBsum" id="3CCL"/>
<dbReference type="PDBsum" id="3CCM"/>
<dbReference type="PDBsum" id="3CCQ"/>
<dbReference type="PDBsum" id="3CCR"/>
<dbReference type="PDBsum" id="3CCS"/>
<dbReference type="PDBsum" id="3CCU"/>
<dbReference type="PDBsum" id="3CCV"/>
<dbReference type="PDBsum" id="3CD6"/>
<dbReference type="PDBsum" id="3CMA"/>
<dbReference type="PDBsum" id="3CME"/>
<dbReference type="PDBsum" id="3CPW"/>
<dbReference type="PDBsum" id="3CXC"/>
<dbReference type="PDBsum" id="3G4S"/>
<dbReference type="PDBsum" id="3G6E"/>
<dbReference type="PDBsum" id="3G71"/>
<dbReference type="PDBsum" id="3I55"/>
<dbReference type="PDBsum" id="3I56"/>
<dbReference type="PDBsum" id="3OW2"/>
<dbReference type="PDBsum" id="4ADX"/>
<dbReference type="PDBsum" id="4V9F"/>
<dbReference type="SMR" id="P12734"/>
<dbReference type="IntAct" id="P12734">
    <property type="interactions" value="2"/>
</dbReference>
<dbReference type="STRING" id="272569.rrnAC0260"/>
<dbReference type="PaxDb" id="272569-rrnAC0260"/>
<dbReference type="EnsemblBacteria" id="AAV45317">
    <property type="protein sequence ID" value="AAV45317"/>
    <property type="gene ID" value="rrnAC0260"/>
</dbReference>
<dbReference type="KEGG" id="hma:rrnAC0260"/>
<dbReference type="PATRIC" id="fig|272569.17.peg.1055"/>
<dbReference type="eggNOG" id="arCOG04129">
    <property type="taxonomic scope" value="Archaea"/>
</dbReference>
<dbReference type="HOGENOM" id="CLU_103610_1_1_2"/>
<dbReference type="EvolutionaryTrace" id="P12734"/>
<dbReference type="Proteomes" id="UP000001169">
    <property type="component" value="Chromosome I"/>
</dbReference>
<dbReference type="GO" id="GO:1990904">
    <property type="term" value="C:ribonucleoprotein complex"/>
    <property type="evidence" value="ECO:0007669"/>
    <property type="project" value="UniProtKB-KW"/>
</dbReference>
<dbReference type="GO" id="GO:0005840">
    <property type="term" value="C:ribosome"/>
    <property type="evidence" value="ECO:0007669"/>
    <property type="project" value="UniProtKB-KW"/>
</dbReference>
<dbReference type="GO" id="GO:0019843">
    <property type="term" value="F:rRNA binding"/>
    <property type="evidence" value="ECO:0007669"/>
    <property type="project" value="UniProtKB-KW"/>
</dbReference>
<dbReference type="GO" id="GO:0003735">
    <property type="term" value="F:structural constituent of ribosome"/>
    <property type="evidence" value="ECO:0007669"/>
    <property type="project" value="InterPro"/>
</dbReference>
<dbReference type="GO" id="GO:0006412">
    <property type="term" value="P:translation"/>
    <property type="evidence" value="ECO:0007669"/>
    <property type="project" value="UniProtKB-UniRule"/>
</dbReference>
<dbReference type="Gene3D" id="2.30.30.70">
    <property type="entry name" value="Ribosomal protein L21"/>
    <property type="match status" value="1"/>
</dbReference>
<dbReference type="HAMAP" id="MF_00369">
    <property type="entry name" value="Ribosomal_eL21"/>
    <property type="match status" value="1"/>
</dbReference>
<dbReference type="InterPro" id="IPR001147">
    <property type="entry name" value="Ribosomal_eL21"/>
</dbReference>
<dbReference type="InterPro" id="IPR022856">
    <property type="entry name" value="Ribosomal_eL21_arc"/>
</dbReference>
<dbReference type="InterPro" id="IPR018259">
    <property type="entry name" value="Ribosomal_eL21_CS"/>
</dbReference>
<dbReference type="InterPro" id="IPR036948">
    <property type="entry name" value="Ribosomal_eL21_sf"/>
</dbReference>
<dbReference type="InterPro" id="IPR008991">
    <property type="entry name" value="Translation_prot_SH3-like_sf"/>
</dbReference>
<dbReference type="NCBIfam" id="NF003303">
    <property type="entry name" value="PRK04306.1"/>
    <property type="match status" value="1"/>
</dbReference>
<dbReference type="Pfam" id="PF01157">
    <property type="entry name" value="Ribosomal_L21e"/>
    <property type="match status" value="1"/>
</dbReference>
<dbReference type="SUPFAM" id="SSF50104">
    <property type="entry name" value="Translation proteins SH3-like domain"/>
    <property type="match status" value="1"/>
</dbReference>
<dbReference type="PROSITE" id="PS01171">
    <property type="entry name" value="RIBOSOMAL_L21E"/>
    <property type="match status" value="1"/>
</dbReference>
<accession>P12734</accession>
<accession>Q5V585</accession>